<sequence length="341" mass="35717">MKTATLLAALSVLAGALAAPLAGDSALHRRSLPRLGGVNLAGCDFGIDIYGNSGTPACPGTEQVGHFIADGANLFRLPAGWQYLVGNNQASTSLAPDFFAQYDALVQAVISKGAYAIIDVHNYARWNGAIIGQGGPSNQDFANLWTLLATKVTSNDPNVIFGLMNEPHDLDVSTWAGSVQAAVNAIRAAGATSQYILIPGTGFTNANAWFQGQDNALLGVTDPVGGTDKLLLDVHRYNDVDFSGTHAECTTNSLDVLSSLDSWLKGNGRKAIVSETGGGHTTSCETDLGEFLNGIKEDYPSVLGFAVWAAGSFDPSYVLSITPTNGVDNQLFDIAVKPNLP</sequence>
<organism>
    <name type="scientific">Saitozyma flava</name>
    <name type="common">Cryptococcus flavus</name>
    <dbReference type="NCBI Taxonomy" id="5416"/>
    <lineage>
        <taxon>Eukaryota</taxon>
        <taxon>Fungi</taxon>
        <taxon>Dikarya</taxon>
        <taxon>Basidiomycota</taxon>
        <taxon>Agaricomycotina</taxon>
        <taxon>Tremellomycetes</taxon>
        <taxon>Tremellales</taxon>
        <taxon>Trimorphomycetaceae</taxon>
        <taxon>Saitozyma</taxon>
    </lineage>
</organism>
<gene>
    <name type="primary">CMC1</name>
</gene>
<dbReference type="EC" id="3.2.1.4"/>
<dbReference type="EMBL" id="D13967">
    <property type="protein sequence ID" value="BAA03070.1"/>
    <property type="molecule type" value="mRNA"/>
</dbReference>
<dbReference type="EMBL" id="S45137">
    <property type="protein sequence ID" value="AAC60541.1"/>
    <property type="molecule type" value="Genomic_DNA"/>
</dbReference>
<dbReference type="PIR" id="JC1201">
    <property type="entry name" value="JC1201"/>
</dbReference>
<dbReference type="SMR" id="Q04469"/>
<dbReference type="CAZy" id="GH5">
    <property type="family name" value="Glycoside Hydrolase Family 5"/>
</dbReference>
<dbReference type="GO" id="GO:0008810">
    <property type="term" value="F:cellulase activity"/>
    <property type="evidence" value="ECO:0007669"/>
    <property type="project" value="UniProtKB-EC"/>
</dbReference>
<dbReference type="GO" id="GO:0030245">
    <property type="term" value="P:cellulose catabolic process"/>
    <property type="evidence" value="ECO:0007669"/>
    <property type="project" value="UniProtKB-KW"/>
</dbReference>
<dbReference type="Gene3D" id="3.20.20.80">
    <property type="entry name" value="Glycosidases"/>
    <property type="match status" value="1"/>
</dbReference>
<dbReference type="InterPro" id="IPR001547">
    <property type="entry name" value="Glyco_hydro_5"/>
</dbReference>
<dbReference type="InterPro" id="IPR018087">
    <property type="entry name" value="Glyco_hydro_5_CS"/>
</dbReference>
<dbReference type="InterPro" id="IPR017853">
    <property type="entry name" value="Glycoside_hydrolase_SF"/>
</dbReference>
<dbReference type="PANTHER" id="PTHR34142:SF5">
    <property type="entry name" value="CBM1 DOMAIN-CONTAINING PROTEIN"/>
    <property type="match status" value="1"/>
</dbReference>
<dbReference type="PANTHER" id="PTHR34142">
    <property type="entry name" value="ENDO-BETA-1,4-GLUCANASE A"/>
    <property type="match status" value="1"/>
</dbReference>
<dbReference type="Pfam" id="PF00150">
    <property type="entry name" value="Cellulase"/>
    <property type="match status" value="1"/>
</dbReference>
<dbReference type="SUPFAM" id="SSF51445">
    <property type="entry name" value="(Trans)glycosidases"/>
    <property type="match status" value="1"/>
</dbReference>
<dbReference type="PROSITE" id="PS00659">
    <property type="entry name" value="GLYCOSYL_HYDROL_F5"/>
    <property type="match status" value="1"/>
</dbReference>
<evidence type="ECO:0000250" key="1"/>
<evidence type="ECO:0000255" key="2"/>
<evidence type="ECO:0000305" key="3"/>
<feature type="signal peptide" evidence="2">
    <location>
        <begin position="1"/>
        <end position="16"/>
    </location>
</feature>
<feature type="propeptide" id="PRO_0000007855" evidence="2">
    <location>
        <begin position="17"/>
        <end position="30"/>
    </location>
</feature>
<feature type="chain" id="PRO_0000007856" description="Endoglucanase 1">
    <location>
        <begin position="31"/>
        <end position="341"/>
    </location>
</feature>
<feature type="active site" description="Proton donor" evidence="1">
    <location>
        <position position="166"/>
    </location>
</feature>
<feature type="active site" description="Nucleophile" evidence="1">
    <location>
        <position position="275"/>
    </location>
</feature>
<reference key="1">
    <citation type="journal article" date="1992" name="Biosci. Biotechnol. Biochem.">
        <title>Cloning and molecular analysis of cDNA encoding a carboxymethylcellulase of the yeast Cryptococcus flavus.</title>
        <authorList>
            <person name="Cui Z."/>
            <person name="Mochizuki D."/>
            <person name="Matsuno Y."/>
            <person name="Nakamura T."/>
            <person name="Liu Y."/>
            <person name="Hatano T."/>
            <person name="Fukui S."/>
            <person name="Miyakawa T."/>
        </authorList>
    </citation>
    <scope>NUCLEOTIDE SEQUENCE</scope>
</reference>
<protein>
    <recommendedName>
        <fullName>Endoglucanase 1</fullName>
        <ecNumber>3.2.1.4</ecNumber>
    </recommendedName>
    <alternativeName>
        <fullName>Carboxymethyl-cellulase 1</fullName>
        <shortName>CMCase 1</shortName>
        <shortName>Cellulase 1</shortName>
    </alternativeName>
    <alternativeName>
        <fullName>Endo-1,4-beta-glucanase 1</fullName>
    </alternativeName>
</protein>
<accession>Q04469</accession>
<proteinExistence type="evidence at transcript level"/>
<comment type="function">
    <text>Has endoglucanase activity on carboxymethyl-cellulose (CMC).</text>
</comment>
<comment type="catalytic activity">
    <reaction>
        <text>Endohydrolysis of (1-&gt;4)-beta-D-glucosidic linkages in cellulose, lichenin and cereal beta-D-glucans.</text>
        <dbReference type="EC" id="3.2.1.4"/>
    </reaction>
</comment>
<comment type="similarity">
    <text evidence="3">Belongs to the glycosyl hydrolase 5 (cellulase A) family.</text>
</comment>
<name>GUN1_SAIFL</name>
<keyword id="KW-0119">Carbohydrate metabolism</keyword>
<keyword id="KW-0136">Cellulose degradation</keyword>
<keyword id="KW-0165">Cleavage on pair of basic residues</keyword>
<keyword id="KW-0326">Glycosidase</keyword>
<keyword id="KW-0378">Hydrolase</keyword>
<keyword id="KW-0624">Polysaccharide degradation</keyword>
<keyword id="KW-0732">Signal</keyword>